<feature type="chain" id="PRO_0000260800" description="UPF0397 protein PBPRA2239">
    <location>
        <begin position="1"/>
        <end position="183"/>
    </location>
</feature>
<feature type="transmembrane region" description="Helical" evidence="1">
    <location>
        <begin position="8"/>
        <end position="28"/>
    </location>
</feature>
<feature type="transmembrane region" description="Helical" evidence="1">
    <location>
        <begin position="41"/>
        <end position="61"/>
    </location>
</feature>
<feature type="transmembrane region" description="Helical" evidence="1">
    <location>
        <begin position="69"/>
        <end position="89"/>
    </location>
</feature>
<feature type="transmembrane region" description="Helical" evidence="1">
    <location>
        <begin position="110"/>
        <end position="130"/>
    </location>
</feature>
<feature type="transmembrane region" description="Helical" evidence="1">
    <location>
        <begin position="147"/>
        <end position="167"/>
    </location>
</feature>
<keyword id="KW-1003">Cell membrane</keyword>
<keyword id="KW-0472">Membrane</keyword>
<keyword id="KW-1185">Reference proteome</keyword>
<keyword id="KW-0812">Transmembrane</keyword>
<keyword id="KW-1133">Transmembrane helix</keyword>
<gene>
    <name type="ordered locus">PBPRA2239</name>
</gene>
<name>Y2239_PHOPR</name>
<sequence length="183" mass="19631">MNLSAKTVVLIAIGAALYGIGGLPMFGIPVFANTTLKPAMAVLALFSVLFGPLVGFLVGFIGHWVTDMFAGWGVWLTWVLGSGLVGLIIGFYPKITRGRLEMGKFTKCDFALFVFLAFLGNVIGYGCSAYLDSVLYAEPFTKVVAQLIIIAAGNTLLIAIVGHYILTAVAKRKQQSYNLKEAD</sequence>
<organism>
    <name type="scientific">Photobacterium profundum (strain SS9)</name>
    <dbReference type="NCBI Taxonomy" id="298386"/>
    <lineage>
        <taxon>Bacteria</taxon>
        <taxon>Pseudomonadati</taxon>
        <taxon>Pseudomonadota</taxon>
        <taxon>Gammaproteobacteria</taxon>
        <taxon>Vibrionales</taxon>
        <taxon>Vibrionaceae</taxon>
        <taxon>Photobacterium</taxon>
    </lineage>
</organism>
<protein>
    <recommendedName>
        <fullName evidence="1">UPF0397 protein PBPRA2239</fullName>
    </recommendedName>
</protein>
<proteinExistence type="inferred from homology"/>
<reference key="1">
    <citation type="journal article" date="2005" name="Science">
        <title>Life at depth: Photobacterium profundum genome sequence and expression analysis.</title>
        <authorList>
            <person name="Vezzi A."/>
            <person name="Campanaro S."/>
            <person name="D'Angelo M."/>
            <person name="Simonato F."/>
            <person name="Vitulo N."/>
            <person name="Lauro F.M."/>
            <person name="Cestaro A."/>
            <person name="Malacrida G."/>
            <person name="Simionati B."/>
            <person name="Cannata N."/>
            <person name="Romualdi C."/>
            <person name="Bartlett D.H."/>
            <person name="Valle G."/>
        </authorList>
    </citation>
    <scope>NUCLEOTIDE SEQUENCE [LARGE SCALE GENOMIC DNA]</scope>
    <source>
        <strain>ATCC BAA-1253 / SS9</strain>
    </source>
</reference>
<evidence type="ECO:0000255" key="1">
    <source>
        <dbReference type="HAMAP-Rule" id="MF_01572"/>
    </source>
</evidence>
<evidence type="ECO:0000305" key="2"/>
<comment type="subcellular location">
    <subcellularLocation>
        <location evidence="1">Cell membrane</location>
        <topology evidence="1">Multi-pass membrane protein</topology>
    </subcellularLocation>
</comment>
<comment type="similarity">
    <text evidence="1">Belongs to the UPF0397 family.</text>
</comment>
<comment type="sequence caution" evidence="2">
    <conflict type="erroneous initiation">
        <sequence resource="EMBL-CDS" id="CAG20625"/>
    </conflict>
</comment>
<accession>Q6LQ01</accession>
<dbReference type="EMBL" id="CR378670">
    <property type="protein sequence ID" value="CAG20625.1"/>
    <property type="status" value="ALT_INIT"/>
    <property type="molecule type" value="Genomic_DNA"/>
</dbReference>
<dbReference type="RefSeq" id="WP_041394769.1">
    <property type="nucleotide sequence ID" value="NC_006370.1"/>
</dbReference>
<dbReference type="SMR" id="Q6LQ01"/>
<dbReference type="STRING" id="298386.PBPRA2239"/>
<dbReference type="KEGG" id="ppr:PBPRA2239"/>
<dbReference type="eggNOG" id="COG4720">
    <property type="taxonomic scope" value="Bacteria"/>
</dbReference>
<dbReference type="HOGENOM" id="CLU_120023_0_0_6"/>
<dbReference type="Proteomes" id="UP000000593">
    <property type="component" value="Chromosome 1"/>
</dbReference>
<dbReference type="GO" id="GO:0005886">
    <property type="term" value="C:plasma membrane"/>
    <property type="evidence" value="ECO:0007669"/>
    <property type="project" value="UniProtKB-SubCell"/>
</dbReference>
<dbReference type="Gene3D" id="1.10.1760.20">
    <property type="match status" value="1"/>
</dbReference>
<dbReference type="HAMAP" id="MF_01572">
    <property type="entry name" value="UPF0397"/>
    <property type="match status" value="1"/>
</dbReference>
<dbReference type="InterPro" id="IPR009825">
    <property type="entry name" value="ECF_substrate-spec-like"/>
</dbReference>
<dbReference type="InterPro" id="IPR022914">
    <property type="entry name" value="UPF0397"/>
</dbReference>
<dbReference type="NCBIfam" id="NF010182">
    <property type="entry name" value="PRK13661.1"/>
    <property type="match status" value="1"/>
</dbReference>
<dbReference type="PANTHER" id="PTHR37815">
    <property type="entry name" value="UPF0397 PROTEIN BC_2624-RELATED"/>
    <property type="match status" value="1"/>
</dbReference>
<dbReference type="PANTHER" id="PTHR37815:SF3">
    <property type="entry name" value="UPF0397 PROTEIN SPR0429"/>
    <property type="match status" value="1"/>
</dbReference>
<dbReference type="Pfam" id="PF07155">
    <property type="entry name" value="ECF-ribofla_trS"/>
    <property type="match status" value="1"/>
</dbReference>